<name>PHOSP_PI1HE</name>
<feature type="chain" id="PRO_0000142702" description="Phosphoprotein">
    <location>
        <begin position="1"/>
        <end position="568"/>
    </location>
</feature>
<feature type="region of interest" description="Disordered" evidence="5">
    <location>
        <begin position="1"/>
        <end position="24"/>
    </location>
</feature>
<feature type="region of interest" description="N0 binding" evidence="1">
    <location>
        <begin position="33"/>
        <end position="41"/>
    </location>
</feature>
<feature type="region of interest" description="Disordered" evidence="5">
    <location>
        <begin position="45"/>
        <end position="324"/>
    </location>
</feature>
<feature type="region of interest" description="Multimerization" evidence="2">
    <location>
        <begin position="344"/>
        <end position="411"/>
    </location>
</feature>
<feature type="region of interest" description="L protein binding" evidence="1">
    <location>
        <begin position="412"/>
        <end position="445"/>
    </location>
</feature>
<feature type="region of interest" description="Disordered" evidence="5">
    <location>
        <begin position="434"/>
        <end position="455"/>
    </location>
</feature>
<feature type="region of interest" description="Interaction with the nucleocapsid (N-RNA)" evidence="1">
    <location>
        <begin position="479"/>
        <end position="568"/>
    </location>
</feature>
<feature type="region of interest" description="Disordered" evidence="5">
    <location>
        <begin position="493"/>
        <end position="513"/>
    </location>
</feature>
<feature type="coiled-coil region" evidence="4">
    <location>
        <begin position="387"/>
        <end position="416"/>
    </location>
</feature>
<feature type="compositionally biased region" description="Basic and acidic residues" evidence="5">
    <location>
        <begin position="7"/>
        <end position="24"/>
    </location>
</feature>
<feature type="compositionally biased region" description="Basic and acidic residues" evidence="5">
    <location>
        <begin position="56"/>
        <end position="105"/>
    </location>
</feature>
<feature type="compositionally biased region" description="Basic and acidic residues" evidence="5">
    <location>
        <begin position="129"/>
        <end position="144"/>
    </location>
</feature>
<feature type="compositionally biased region" description="Basic and acidic residues" evidence="5">
    <location>
        <begin position="151"/>
        <end position="167"/>
    </location>
</feature>
<feature type="compositionally biased region" description="Polar residues" evidence="5">
    <location>
        <begin position="179"/>
        <end position="216"/>
    </location>
</feature>
<feature type="compositionally biased region" description="Basic and acidic residues" evidence="5">
    <location>
        <begin position="239"/>
        <end position="253"/>
    </location>
</feature>
<feature type="compositionally biased region" description="Low complexity" evidence="5">
    <location>
        <begin position="295"/>
        <end position="304"/>
    </location>
</feature>
<feature type="compositionally biased region" description="Polar residues" evidence="5">
    <location>
        <begin position="441"/>
        <end position="450"/>
    </location>
</feature>
<proteinExistence type="inferred from homology"/>
<reference key="1">
    <citation type="journal article" date="1992" name="Virology">
        <title>The P genes of human parainfluenza virus type 1 clinical isolates are polycistronic and microheterogeneous.</title>
        <authorList>
            <person name="Power U.F."/>
            <person name="Ryan K.W."/>
            <person name="Portner A."/>
        </authorList>
    </citation>
    <scope>NUCLEOTIDE SEQUENCE [GENOMIC RNA]</scope>
</reference>
<gene>
    <name type="primary">P/C</name>
</gene>
<sequence length="568" mass="64586">MDQDAFFFERDPEAEGEAPRKQESLSDVIGLLDVVLSYKPTEIGEDRSWLHNIIDNPKENKSSCKSDDNNKDRAISTSTQDHRSSEESGISRRTGESKTETHARILDQQGIHRASRRGTSPNPLPENMGDERNTRIDEDSPNERRHQRSVPTDEDRKMAENSNKREEDQVEGFPEEVRGSTSLSDDGEGRTNNNGRSMETSSTHSTRITDVITNPSPELEEAVLQRKKRRPTTIKRNQTRSERTQNSELHKSTSGDSSNLEDHNTKTSQKIPPSKNEEPAVTQKNNHNHRKTKHTTNNANNNAKCLPTPEHDTTSNEEGTSNTSVDEMAKLLVSLGVMKSQHEFELSRRASHQFAKRMLKSANYKEMTFNLCGMLLSVEKSLGNKVEENRTLLKQIQEEIDSSRDLHKRFSEYQKEQNSLMMANLSTLHIITDRGGKTGDPSDTTRSPSVFTKGKDNKVKKTRFDPSMEALGGQEFKPDLIREDELREDIRNPVLEEHNNEPQASNASRLIPSTEKHTLHSLKLVIENSPLSRVEKKAYIKSLYKCRTNQEVKNVMELFEEDIDSLTN</sequence>
<protein>
    <recommendedName>
        <fullName>Phosphoprotein</fullName>
        <shortName>Protein P</shortName>
    </recommendedName>
</protein>
<keyword id="KW-0175">Coiled coil</keyword>
<keyword id="KW-0597">Phosphoprotein</keyword>
<keyword id="KW-0693">Viral RNA replication</keyword>
<dbReference type="EMBL" id="M74080">
    <property type="protein sequence ID" value="AAA46830.1"/>
    <property type="molecule type" value="Genomic_RNA"/>
</dbReference>
<dbReference type="PIR" id="E40234">
    <property type="entry name" value="RRNZ83"/>
</dbReference>
<dbReference type="SMR" id="P32532"/>
<dbReference type="GO" id="GO:0003723">
    <property type="term" value="F:RNA binding"/>
    <property type="evidence" value="ECO:0007669"/>
    <property type="project" value="InterPro"/>
</dbReference>
<dbReference type="GO" id="GO:0003968">
    <property type="term" value="F:RNA-directed RNA polymerase activity"/>
    <property type="evidence" value="ECO:0007669"/>
    <property type="project" value="InterPro"/>
</dbReference>
<dbReference type="GO" id="GO:0006351">
    <property type="term" value="P:DNA-templated transcription"/>
    <property type="evidence" value="ECO:0007669"/>
    <property type="project" value="InterPro"/>
</dbReference>
<dbReference type="GO" id="GO:0019079">
    <property type="term" value="P:viral genome replication"/>
    <property type="evidence" value="ECO:0007669"/>
    <property type="project" value="InterPro"/>
</dbReference>
<dbReference type="CDD" id="cd21031">
    <property type="entry name" value="MEV_P-protein-C_like"/>
    <property type="match status" value="1"/>
</dbReference>
<dbReference type="Gene3D" id="1.10.287.340">
    <property type="match status" value="1"/>
</dbReference>
<dbReference type="Gene3D" id="1.10.8.10">
    <property type="entry name" value="DNA helicase RuvA subunit, C-terminal domain"/>
    <property type="match status" value="1"/>
</dbReference>
<dbReference type="Gene3D" id="1.10.287.320">
    <property type="entry name" value="Viral phosphoprotein oligmorisation site domain"/>
    <property type="match status" value="1"/>
</dbReference>
<dbReference type="InterPro" id="IPR002693">
    <property type="entry name" value="Paramyxo_PProtein_C"/>
</dbReference>
<dbReference type="InterPro" id="IPR043097">
    <property type="entry name" value="PProtein_oligomer_dom1"/>
</dbReference>
<dbReference type="InterPro" id="IPR016075">
    <property type="entry name" value="RNA_pol_Pprot-P_XD_paramyxovir"/>
</dbReference>
<dbReference type="Pfam" id="PF01806">
    <property type="entry name" value="Paramyxo_P"/>
    <property type="match status" value="1"/>
</dbReference>
<dbReference type="SUPFAM" id="SSF58034">
    <property type="entry name" value="Multimerization domain of the phosphoprotein from sendai virus"/>
    <property type="match status" value="1"/>
</dbReference>
<dbReference type="SUPFAM" id="SSF101089">
    <property type="entry name" value="Phosphoprotein XD domain"/>
    <property type="match status" value="1"/>
</dbReference>
<organismHost>
    <name type="scientific">Homo sapiens</name>
    <name type="common">Human</name>
    <dbReference type="NCBI Taxonomy" id="9606"/>
</organismHost>
<organism>
    <name type="scientific">Human parainfluenza 1 virus (strain CI-14/83)</name>
    <name type="common">HPIV-1</name>
    <dbReference type="NCBI Taxonomy" id="31606"/>
    <lineage>
        <taxon>Viruses</taxon>
        <taxon>Riboviria</taxon>
        <taxon>Orthornavirae</taxon>
        <taxon>Negarnaviricota</taxon>
        <taxon>Haploviricotina</taxon>
        <taxon>Monjiviricetes</taxon>
        <taxon>Mononegavirales</taxon>
        <taxon>Paramyxoviridae</taxon>
        <taxon>Feraresvirinae</taxon>
        <taxon>Respirovirus</taxon>
        <taxon>Respirovirus laryngotracheitidis</taxon>
    </lineage>
</organism>
<accession>P32532</accession>
<comment type="function">
    <text evidence="2 3">Essential cofactor of the RNA polymerase L that plays a central role in the transcription and replication by forming the polymerase complex with RNA polymerase L and recruiting L to the genomic N-RNA template for RNA synthesis. Also plays a central role in the encapsidation of nascent RNA chains by forming the encapsidation complex with the nucleocapsid protein N (N-P complex). Acts as a chaperone for newly synthesized free N protein, so-called N0, allowing encapsidation of nascent RNA chains during replication (By similarity). The nucleoprotein protein N prevents excessive phosphorylation of P, which leads to down-regulation of viral transcription/ replication. Participates, together with N, in the formation of viral factories (viroplasms), which are large inclusions in the host cytoplasm where replication takes place (By similarity). Recruits host PI4KB and remodel the host endoplasmic reticulum membrane to form viral replication factories (By similarity).</text>
</comment>
<comment type="subunit">
    <text evidence="1">Homotetramer. Interacts (via multimerization domain) with polymerase L; this interaction forms the polymerase complex. Interacts (via N-terminus) with N0; this interaction allows P to chaperon N0 before encapsidation and form the N-P complex. Interacts (via C-terminus) with N-RNA template; this interaction positions the polymerase on the template.</text>
</comment>
<comment type="domain">
    <text evidence="1 2">The N-terminus consists of a long intrinsically disordered tail (By similarity). The central part contains the coiled-coil multimerization domain (PMD). Forms a four-stranded coiled coil structure. The C-terminus constitutes the alpha-helical domain that binds to the nucleocapsid (N-RNA complex) (By similarity).</text>
</comment>
<comment type="similarity">
    <text evidence="6">Belongs to the respirovirus P protein family.</text>
</comment>
<evidence type="ECO:0000250" key="1">
    <source>
        <dbReference type="UniProtKB" id="P04859"/>
    </source>
</evidence>
<evidence type="ECO:0000250" key="2">
    <source>
        <dbReference type="UniProtKB" id="P06162"/>
    </source>
</evidence>
<evidence type="ECO:0000250" key="3">
    <source>
        <dbReference type="UniProtKB" id="Q77M42"/>
    </source>
</evidence>
<evidence type="ECO:0000255" key="4"/>
<evidence type="ECO:0000256" key="5">
    <source>
        <dbReference type="SAM" id="MobiDB-lite"/>
    </source>
</evidence>
<evidence type="ECO:0000305" key="6"/>